<feature type="chain" id="PRO_0000376286" description="NADH-quinone oxidoreductase subunit B">
    <location>
        <begin position="1"/>
        <end position="184"/>
    </location>
</feature>
<feature type="binding site" evidence="1">
    <location>
        <position position="37"/>
    </location>
    <ligand>
        <name>[4Fe-4S] cluster</name>
        <dbReference type="ChEBI" id="CHEBI:49883"/>
    </ligand>
</feature>
<feature type="binding site" evidence="1">
    <location>
        <position position="38"/>
    </location>
    <ligand>
        <name>[4Fe-4S] cluster</name>
        <dbReference type="ChEBI" id="CHEBI:49883"/>
    </ligand>
</feature>
<feature type="binding site" evidence="1">
    <location>
        <position position="103"/>
    </location>
    <ligand>
        <name>[4Fe-4S] cluster</name>
        <dbReference type="ChEBI" id="CHEBI:49883"/>
    </ligand>
</feature>
<feature type="binding site" evidence="1">
    <location>
        <position position="132"/>
    </location>
    <ligand>
        <name>[4Fe-4S] cluster</name>
        <dbReference type="ChEBI" id="CHEBI:49883"/>
    </ligand>
</feature>
<dbReference type="EC" id="7.1.1.-" evidence="1"/>
<dbReference type="EMBL" id="CP000511">
    <property type="protein sequence ID" value="ABM12705.1"/>
    <property type="molecule type" value="Genomic_DNA"/>
</dbReference>
<dbReference type="RefSeq" id="WP_011779123.1">
    <property type="nucleotide sequence ID" value="NZ_JACKSD010000325.1"/>
</dbReference>
<dbReference type="SMR" id="A1T6A5"/>
<dbReference type="STRING" id="350058.Mvan_1884"/>
<dbReference type="KEGG" id="mva:Mvan_1884"/>
<dbReference type="eggNOG" id="COG0377">
    <property type="taxonomic scope" value="Bacteria"/>
</dbReference>
<dbReference type="HOGENOM" id="CLU_055737_7_3_11"/>
<dbReference type="Proteomes" id="UP000009159">
    <property type="component" value="Chromosome"/>
</dbReference>
<dbReference type="GO" id="GO:0005886">
    <property type="term" value="C:plasma membrane"/>
    <property type="evidence" value="ECO:0007669"/>
    <property type="project" value="UniProtKB-SubCell"/>
</dbReference>
<dbReference type="GO" id="GO:0045271">
    <property type="term" value="C:respiratory chain complex I"/>
    <property type="evidence" value="ECO:0007669"/>
    <property type="project" value="TreeGrafter"/>
</dbReference>
<dbReference type="GO" id="GO:0051539">
    <property type="term" value="F:4 iron, 4 sulfur cluster binding"/>
    <property type="evidence" value="ECO:0007669"/>
    <property type="project" value="UniProtKB-KW"/>
</dbReference>
<dbReference type="GO" id="GO:0005506">
    <property type="term" value="F:iron ion binding"/>
    <property type="evidence" value="ECO:0007669"/>
    <property type="project" value="UniProtKB-UniRule"/>
</dbReference>
<dbReference type="GO" id="GO:0008137">
    <property type="term" value="F:NADH dehydrogenase (ubiquinone) activity"/>
    <property type="evidence" value="ECO:0007669"/>
    <property type="project" value="InterPro"/>
</dbReference>
<dbReference type="GO" id="GO:0050136">
    <property type="term" value="F:NADH:ubiquinone reductase (non-electrogenic) activity"/>
    <property type="evidence" value="ECO:0007669"/>
    <property type="project" value="UniProtKB-UniRule"/>
</dbReference>
<dbReference type="GO" id="GO:0048038">
    <property type="term" value="F:quinone binding"/>
    <property type="evidence" value="ECO:0007669"/>
    <property type="project" value="UniProtKB-KW"/>
</dbReference>
<dbReference type="GO" id="GO:0009060">
    <property type="term" value="P:aerobic respiration"/>
    <property type="evidence" value="ECO:0007669"/>
    <property type="project" value="TreeGrafter"/>
</dbReference>
<dbReference type="GO" id="GO:0015990">
    <property type="term" value="P:electron transport coupled proton transport"/>
    <property type="evidence" value="ECO:0007669"/>
    <property type="project" value="TreeGrafter"/>
</dbReference>
<dbReference type="FunFam" id="3.40.50.12280:FF:000004">
    <property type="entry name" value="NADH-quinone oxidoreductase subunit B"/>
    <property type="match status" value="1"/>
</dbReference>
<dbReference type="Gene3D" id="3.40.50.12280">
    <property type="match status" value="1"/>
</dbReference>
<dbReference type="HAMAP" id="MF_01356">
    <property type="entry name" value="NDH1_NuoB"/>
    <property type="match status" value="1"/>
</dbReference>
<dbReference type="InterPro" id="IPR006137">
    <property type="entry name" value="NADH_UbQ_OxRdtase-like_20kDa"/>
</dbReference>
<dbReference type="InterPro" id="IPR006138">
    <property type="entry name" value="NADH_UQ_OxRdtase_20Kd_su"/>
</dbReference>
<dbReference type="NCBIfam" id="TIGR01957">
    <property type="entry name" value="nuoB_fam"/>
    <property type="match status" value="1"/>
</dbReference>
<dbReference type="NCBIfam" id="NF005012">
    <property type="entry name" value="PRK06411.1"/>
    <property type="match status" value="1"/>
</dbReference>
<dbReference type="PANTHER" id="PTHR11995">
    <property type="entry name" value="NADH DEHYDROGENASE"/>
    <property type="match status" value="1"/>
</dbReference>
<dbReference type="PANTHER" id="PTHR11995:SF14">
    <property type="entry name" value="NADH DEHYDROGENASE [UBIQUINONE] IRON-SULFUR PROTEIN 7, MITOCHONDRIAL"/>
    <property type="match status" value="1"/>
</dbReference>
<dbReference type="Pfam" id="PF01058">
    <property type="entry name" value="Oxidored_q6"/>
    <property type="match status" value="1"/>
</dbReference>
<dbReference type="SUPFAM" id="SSF56770">
    <property type="entry name" value="HydA/Nqo6-like"/>
    <property type="match status" value="1"/>
</dbReference>
<dbReference type="PROSITE" id="PS01150">
    <property type="entry name" value="COMPLEX1_20K"/>
    <property type="match status" value="1"/>
</dbReference>
<protein>
    <recommendedName>
        <fullName evidence="1">NADH-quinone oxidoreductase subunit B</fullName>
        <ecNumber evidence="1">7.1.1.-</ecNumber>
    </recommendedName>
    <alternativeName>
        <fullName evidence="1">NADH dehydrogenase I subunit B</fullName>
    </alternativeName>
    <alternativeName>
        <fullName evidence="1">NDH-1 subunit B</fullName>
    </alternativeName>
</protein>
<sequence length="184" mass="20134">MGLEERLPGGILLSTVEKVAGYVRKGSLWPATFGLACCAIEMMATAGPRFDISRFGMERFSATPRQADLMIVAGRVSQKMAPVLRQIYDQMAEPKWVLAMGVCASSGGMFNNYAVVQGVDHVVPVDIYLPGCPPRPEMLLHAILKLHDKIQQMPLGVNREEAIREAERAALAVTPTIELKGLLR</sequence>
<evidence type="ECO:0000255" key="1">
    <source>
        <dbReference type="HAMAP-Rule" id="MF_01356"/>
    </source>
</evidence>
<comment type="function">
    <text evidence="1">NDH-1 shuttles electrons from NADH, via FMN and iron-sulfur (Fe-S) centers, to quinones in the respiratory chain. The immediate electron acceptor for the enzyme in this species is believed to be a menaquinone. Couples the redox reaction to proton translocation (for every two electrons transferred, four hydrogen ions are translocated across the cytoplasmic membrane), and thus conserves the redox energy in a proton gradient.</text>
</comment>
<comment type="catalytic activity">
    <reaction evidence="1">
        <text>a quinone + NADH + 5 H(+)(in) = a quinol + NAD(+) + 4 H(+)(out)</text>
        <dbReference type="Rhea" id="RHEA:57888"/>
        <dbReference type="ChEBI" id="CHEBI:15378"/>
        <dbReference type="ChEBI" id="CHEBI:24646"/>
        <dbReference type="ChEBI" id="CHEBI:57540"/>
        <dbReference type="ChEBI" id="CHEBI:57945"/>
        <dbReference type="ChEBI" id="CHEBI:132124"/>
    </reaction>
</comment>
<comment type="cofactor">
    <cofactor evidence="1">
        <name>[4Fe-4S] cluster</name>
        <dbReference type="ChEBI" id="CHEBI:49883"/>
    </cofactor>
    <text evidence="1">Binds 1 [4Fe-4S] cluster.</text>
</comment>
<comment type="subunit">
    <text evidence="1">NDH-1 is composed of 14 different subunits. Subunits NuoB, C, D, E, F, and G constitute the peripheral sector of the complex.</text>
</comment>
<comment type="subcellular location">
    <subcellularLocation>
        <location evidence="1">Cell membrane</location>
        <topology evidence="1">Peripheral membrane protein</topology>
        <orientation evidence="1">Cytoplasmic side</orientation>
    </subcellularLocation>
</comment>
<comment type="similarity">
    <text evidence="1">Belongs to the complex I 20 kDa subunit family.</text>
</comment>
<proteinExistence type="inferred from homology"/>
<gene>
    <name evidence="1" type="primary">nuoB</name>
    <name type="ordered locus">Mvan_1884</name>
</gene>
<keyword id="KW-0004">4Fe-4S</keyword>
<keyword id="KW-1003">Cell membrane</keyword>
<keyword id="KW-0408">Iron</keyword>
<keyword id="KW-0411">Iron-sulfur</keyword>
<keyword id="KW-0472">Membrane</keyword>
<keyword id="KW-0479">Metal-binding</keyword>
<keyword id="KW-0520">NAD</keyword>
<keyword id="KW-0874">Quinone</keyword>
<keyword id="KW-1278">Translocase</keyword>
<keyword id="KW-0813">Transport</keyword>
<accession>A1T6A5</accession>
<organism>
    <name type="scientific">Mycolicibacterium vanbaalenii (strain DSM 7251 / JCM 13017 / BCRC 16820 / KCTC 9966 / NRRL B-24157 / PYR-1)</name>
    <name type="common">Mycobacterium vanbaalenii</name>
    <dbReference type="NCBI Taxonomy" id="350058"/>
    <lineage>
        <taxon>Bacteria</taxon>
        <taxon>Bacillati</taxon>
        <taxon>Actinomycetota</taxon>
        <taxon>Actinomycetes</taxon>
        <taxon>Mycobacteriales</taxon>
        <taxon>Mycobacteriaceae</taxon>
        <taxon>Mycolicibacterium</taxon>
    </lineage>
</organism>
<name>NUOB_MYCVP</name>
<reference key="1">
    <citation type="submission" date="2006-12" db="EMBL/GenBank/DDBJ databases">
        <title>Complete sequence of Mycobacterium vanbaalenii PYR-1.</title>
        <authorList>
            <consortium name="US DOE Joint Genome Institute"/>
            <person name="Copeland A."/>
            <person name="Lucas S."/>
            <person name="Lapidus A."/>
            <person name="Barry K."/>
            <person name="Detter J.C."/>
            <person name="Glavina del Rio T."/>
            <person name="Hammon N."/>
            <person name="Israni S."/>
            <person name="Dalin E."/>
            <person name="Tice H."/>
            <person name="Pitluck S."/>
            <person name="Singan V."/>
            <person name="Schmutz J."/>
            <person name="Larimer F."/>
            <person name="Land M."/>
            <person name="Hauser L."/>
            <person name="Kyrpides N."/>
            <person name="Anderson I.J."/>
            <person name="Miller C."/>
            <person name="Richardson P."/>
        </authorList>
    </citation>
    <scope>NUCLEOTIDE SEQUENCE [LARGE SCALE GENOMIC DNA]</scope>
    <source>
        <strain>DSM 7251 / JCM 13017 / BCRC 16820 / KCTC 9966 / NRRL B-24157 / PYR-1</strain>
    </source>
</reference>